<keyword id="KW-0963">Cytoplasm</keyword>
<keyword id="KW-0489">Methyltransferase</keyword>
<keyword id="KW-0545">Nucleotide biosynthesis</keyword>
<keyword id="KW-0808">Transferase</keyword>
<dbReference type="EC" id="2.1.1.-" evidence="1"/>
<dbReference type="EMBL" id="AE008384">
    <property type="protein sequence ID" value="AAM30933.1"/>
    <property type="molecule type" value="Genomic_DNA"/>
</dbReference>
<dbReference type="RefSeq" id="WP_011033186.1">
    <property type="nucleotide sequence ID" value="NC_003901.1"/>
</dbReference>
<dbReference type="SMR" id="Q8PXI1"/>
<dbReference type="KEGG" id="mma:MM_1237"/>
<dbReference type="PATRIC" id="fig|192952.21.peg.1442"/>
<dbReference type="eggNOG" id="arCOG03214">
    <property type="taxonomic scope" value="Archaea"/>
</dbReference>
<dbReference type="HOGENOM" id="CLU_084975_0_0_2"/>
<dbReference type="UniPathway" id="UPA00575"/>
<dbReference type="Proteomes" id="UP000000595">
    <property type="component" value="Chromosome"/>
</dbReference>
<dbReference type="GO" id="GO:0005829">
    <property type="term" value="C:cytosol"/>
    <property type="evidence" value="ECO:0007669"/>
    <property type="project" value="TreeGrafter"/>
</dbReference>
<dbReference type="GO" id="GO:0004799">
    <property type="term" value="F:thymidylate synthase activity"/>
    <property type="evidence" value="ECO:0007669"/>
    <property type="project" value="UniProtKB-UniRule"/>
</dbReference>
<dbReference type="GO" id="GO:0006231">
    <property type="term" value="P:dTMP biosynthetic process"/>
    <property type="evidence" value="ECO:0007669"/>
    <property type="project" value="UniProtKB-UniRule"/>
</dbReference>
<dbReference type="GO" id="GO:0006235">
    <property type="term" value="P:dTTP biosynthetic process"/>
    <property type="evidence" value="ECO:0007669"/>
    <property type="project" value="UniProtKB-UniRule"/>
</dbReference>
<dbReference type="GO" id="GO:0032259">
    <property type="term" value="P:methylation"/>
    <property type="evidence" value="ECO:0007669"/>
    <property type="project" value="UniProtKB-KW"/>
</dbReference>
<dbReference type="CDD" id="cd00351">
    <property type="entry name" value="TS_Pyrimidine_HMase"/>
    <property type="match status" value="1"/>
</dbReference>
<dbReference type="FunFam" id="3.30.572.10:FF:000014">
    <property type="entry name" value="Putative thymidylate synthase"/>
    <property type="match status" value="1"/>
</dbReference>
<dbReference type="Gene3D" id="3.30.572.10">
    <property type="entry name" value="Thymidylate synthase/dCMP hydroxymethylase domain"/>
    <property type="match status" value="1"/>
</dbReference>
<dbReference type="HAMAP" id="MF_01686">
    <property type="entry name" value="Thymidy_synth_arch"/>
    <property type="match status" value="1"/>
</dbReference>
<dbReference type="InterPro" id="IPR045097">
    <property type="entry name" value="Thymidate_synth/dCMP_Mease"/>
</dbReference>
<dbReference type="InterPro" id="IPR023451">
    <property type="entry name" value="Thymidate_synth/dCMP_Mease_dom"/>
</dbReference>
<dbReference type="InterPro" id="IPR036926">
    <property type="entry name" value="Thymidate_synth/dCMP_Mease_sf"/>
</dbReference>
<dbReference type="InterPro" id="IPR014620">
    <property type="entry name" value="Thymidylate_synthase_arc"/>
</dbReference>
<dbReference type="NCBIfam" id="TIGR03283">
    <property type="entry name" value="thy_syn_methano"/>
    <property type="match status" value="1"/>
</dbReference>
<dbReference type="PANTHER" id="PTHR11548">
    <property type="entry name" value="THYMIDYLATE SYNTHASE 1"/>
    <property type="match status" value="1"/>
</dbReference>
<dbReference type="PANTHER" id="PTHR11548:SF1">
    <property type="entry name" value="THYMIDYLATE SYNTHASE 1"/>
    <property type="match status" value="1"/>
</dbReference>
<dbReference type="Pfam" id="PF00303">
    <property type="entry name" value="Thymidylat_synt"/>
    <property type="match status" value="1"/>
</dbReference>
<dbReference type="PIRSF" id="PIRSF036752">
    <property type="entry name" value="TSase_MJ051"/>
    <property type="match status" value="1"/>
</dbReference>
<dbReference type="SUPFAM" id="SSF55831">
    <property type="entry name" value="Thymidylate synthase/dCMP hydroxymethylase"/>
    <property type="match status" value="1"/>
</dbReference>
<organism>
    <name type="scientific">Methanosarcina mazei (strain ATCC BAA-159 / DSM 3647 / Goe1 / Go1 / JCM 11833 / OCM 88)</name>
    <name type="common">Methanosarcina frisia</name>
    <dbReference type="NCBI Taxonomy" id="192952"/>
    <lineage>
        <taxon>Archaea</taxon>
        <taxon>Methanobacteriati</taxon>
        <taxon>Methanobacteriota</taxon>
        <taxon>Stenosarchaea group</taxon>
        <taxon>Methanomicrobia</taxon>
        <taxon>Methanosarcinales</taxon>
        <taxon>Methanosarcinaceae</taxon>
        <taxon>Methanosarcina</taxon>
    </lineage>
</organism>
<proteinExistence type="inferred from homology"/>
<sequence>MENKFEIGRIIRAKNISDAWYRGLNIIWNHGRVITDERGSQIKEFMDLMVVIENPYTDRIPADTAWNEERLEEYAKQLISGENIQDFEYTYGQRLRNWNGEVDQIEYVIEKLKESPTSRRATAVTWIPPVDTKVNEVPCMILDDFKIRDEKVHLTTLFRSHDFGGAYPANLYGLSKLLEYVAEKVGVEPGVITTVSISAHVYDHDWDMVENIVKGIN</sequence>
<comment type="function">
    <text evidence="1">May catalyze the biosynthesis of dTMP using an unknown cosubstrate.</text>
</comment>
<comment type="pathway">
    <text evidence="1">Pyrimidine metabolism; dTTP biosynthesis.</text>
</comment>
<comment type="subunit">
    <text evidence="1">Monomer.</text>
</comment>
<comment type="subcellular location">
    <subcellularLocation>
        <location evidence="1">Cytoplasm</location>
    </subcellularLocation>
</comment>
<comment type="similarity">
    <text evidence="1">Belongs to the thymidylate synthase family. Archaeal-type ThyA subfamily.</text>
</comment>
<reference key="1">
    <citation type="journal article" date="2002" name="J. Mol. Microbiol. Biotechnol.">
        <title>The genome of Methanosarcina mazei: evidence for lateral gene transfer between Bacteria and Archaea.</title>
        <authorList>
            <person name="Deppenmeier U."/>
            <person name="Johann A."/>
            <person name="Hartsch T."/>
            <person name="Merkl R."/>
            <person name="Schmitz R.A."/>
            <person name="Martinez-Arias R."/>
            <person name="Henne A."/>
            <person name="Wiezer A."/>
            <person name="Baeumer S."/>
            <person name="Jacobi C."/>
            <person name="Brueggemann H."/>
            <person name="Lienard T."/>
            <person name="Christmann A."/>
            <person name="Boemecke M."/>
            <person name="Steckel S."/>
            <person name="Bhattacharyya A."/>
            <person name="Lykidis A."/>
            <person name="Overbeek R."/>
            <person name="Klenk H.-P."/>
            <person name="Gunsalus R.P."/>
            <person name="Fritz H.-J."/>
            <person name="Gottschalk G."/>
        </authorList>
    </citation>
    <scope>NUCLEOTIDE SEQUENCE [LARGE SCALE GENOMIC DNA]</scope>
    <source>
        <strain>ATCC BAA-159 / DSM 3647 / Goe1 / Go1 / JCM 11833 / OCM 88</strain>
    </source>
</reference>
<name>TYSY_METMA</name>
<feature type="chain" id="PRO_0000141057" description="Putative thymidylate synthase">
    <location>
        <begin position="1"/>
        <end position="217"/>
    </location>
</feature>
<feature type="active site" evidence="1">
    <location>
        <position position="139"/>
    </location>
</feature>
<protein>
    <recommendedName>
        <fullName evidence="1">Putative thymidylate synthase</fullName>
        <shortName evidence="1">TS</shortName>
        <shortName evidence="1">TSase</shortName>
        <ecNumber evidence="1">2.1.1.-</ecNumber>
    </recommendedName>
</protein>
<accession>Q8PXI1</accession>
<gene>
    <name evidence="1" type="primary">thyA</name>
    <name type="ordered locus">MM_1237</name>
</gene>
<evidence type="ECO:0000255" key="1">
    <source>
        <dbReference type="HAMAP-Rule" id="MF_01686"/>
    </source>
</evidence>